<dbReference type="EMBL" id="BX640411">
    <property type="protein sequence ID" value="CAE40391.1"/>
    <property type="molecule type" value="Genomic_DNA"/>
</dbReference>
<dbReference type="RefSeq" id="NP_878929.1">
    <property type="nucleotide sequence ID" value="NC_002929.2"/>
</dbReference>
<dbReference type="RefSeq" id="WP_003806887.1">
    <property type="nucleotide sequence ID" value="NZ_CP039022.1"/>
</dbReference>
<dbReference type="SMR" id="Q7W0S2"/>
<dbReference type="STRING" id="257313.BP0011"/>
<dbReference type="PaxDb" id="257313-BP0011"/>
<dbReference type="GeneID" id="93206240"/>
<dbReference type="KEGG" id="bpe:BP0011"/>
<dbReference type="PATRIC" id="fig|257313.5.peg.12"/>
<dbReference type="eggNOG" id="COG0081">
    <property type="taxonomic scope" value="Bacteria"/>
</dbReference>
<dbReference type="HOGENOM" id="CLU_062853_0_0_4"/>
<dbReference type="Proteomes" id="UP000002676">
    <property type="component" value="Chromosome"/>
</dbReference>
<dbReference type="GO" id="GO:0022625">
    <property type="term" value="C:cytosolic large ribosomal subunit"/>
    <property type="evidence" value="ECO:0007669"/>
    <property type="project" value="TreeGrafter"/>
</dbReference>
<dbReference type="GO" id="GO:0019843">
    <property type="term" value="F:rRNA binding"/>
    <property type="evidence" value="ECO:0007669"/>
    <property type="project" value="UniProtKB-UniRule"/>
</dbReference>
<dbReference type="GO" id="GO:0003735">
    <property type="term" value="F:structural constituent of ribosome"/>
    <property type="evidence" value="ECO:0007669"/>
    <property type="project" value="InterPro"/>
</dbReference>
<dbReference type="GO" id="GO:0000049">
    <property type="term" value="F:tRNA binding"/>
    <property type="evidence" value="ECO:0007669"/>
    <property type="project" value="UniProtKB-KW"/>
</dbReference>
<dbReference type="GO" id="GO:0006417">
    <property type="term" value="P:regulation of translation"/>
    <property type="evidence" value="ECO:0007669"/>
    <property type="project" value="UniProtKB-KW"/>
</dbReference>
<dbReference type="GO" id="GO:0006412">
    <property type="term" value="P:translation"/>
    <property type="evidence" value="ECO:0007669"/>
    <property type="project" value="UniProtKB-UniRule"/>
</dbReference>
<dbReference type="CDD" id="cd00403">
    <property type="entry name" value="Ribosomal_L1"/>
    <property type="match status" value="1"/>
</dbReference>
<dbReference type="FunFam" id="3.40.50.790:FF:000001">
    <property type="entry name" value="50S ribosomal protein L1"/>
    <property type="match status" value="1"/>
</dbReference>
<dbReference type="Gene3D" id="3.30.190.20">
    <property type="match status" value="1"/>
</dbReference>
<dbReference type="Gene3D" id="3.40.50.790">
    <property type="match status" value="1"/>
</dbReference>
<dbReference type="HAMAP" id="MF_01318_B">
    <property type="entry name" value="Ribosomal_uL1_B"/>
    <property type="match status" value="1"/>
</dbReference>
<dbReference type="InterPro" id="IPR005878">
    <property type="entry name" value="Ribosom_uL1_bac-type"/>
</dbReference>
<dbReference type="InterPro" id="IPR002143">
    <property type="entry name" value="Ribosomal_uL1"/>
</dbReference>
<dbReference type="InterPro" id="IPR023674">
    <property type="entry name" value="Ribosomal_uL1-like"/>
</dbReference>
<dbReference type="InterPro" id="IPR028364">
    <property type="entry name" value="Ribosomal_uL1/biogenesis"/>
</dbReference>
<dbReference type="InterPro" id="IPR016095">
    <property type="entry name" value="Ribosomal_uL1_3-a/b-sand"/>
</dbReference>
<dbReference type="InterPro" id="IPR023673">
    <property type="entry name" value="Ribosomal_uL1_CS"/>
</dbReference>
<dbReference type="NCBIfam" id="TIGR01169">
    <property type="entry name" value="rplA_bact"/>
    <property type="match status" value="1"/>
</dbReference>
<dbReference type="PANTHER" id="PTHR36427">
    <property type="entry name" value="54S RIBOSOMAL PROTEIN L1, MITOCHONDRIAL"/>
    <property type="match status" value="1"/>
</dbReference>
<dbReference type="PANTHER" id="PTHR36427:SF3">
    <property type="entry name" value="LARGE RIBOSOMAL SUBUNIT PROTEIN UL1M"/>
    <property type="match status" value="1"/>
</dbReference>
<dbReference type="Pfam" id="PF00687">
    <property type="entry name" value="Ribosomal_L1"/>
    <property type="match status" value="1"/>
</dbReference>
<dbReference type="PIRSF" id="PIRSF002155">
    <property type="entry name" value="Ribosomal_L1"/>
    <property type="match status" value="1"/>
</dbReference>
<dbReference type="SUPFAM" id="SSF56808">
    <property type="entry name" value="Ribosomal protein L1"/>
    <property type="match status" value="1"/>
</dbReference>
<dbReference type="PROSITE" id="PS01199">
    <property type="entry name" value="RIBOSOMAL_L1"/>
    <property type="match status" value="1"/>
</dbReference>
<reference key="1">
    <citation type="journal article" date="2003" name="Nat. Genet.">
        <title>Comparative analysis of the genome sequences of Bordetella pertussis, Bordetella parapertussis and Bordetella bronchiseptica.</title>
        <authorList>
            <person name="Parkhill J."/>
            <person name="Sebaihia M."/>
            <person name="Preston A."/>
            <person name="Murphy L.D."/>
            <person name="Thomson N.R."/>
            <person name="Harris D.E."/>
            <person name="Holden M.T.G."/>
            <person name="Churcher C.M."/>
            <person name="Bentley S.D."/>
            <person name="Mungall K.L."/>
            <person name="Cerdeno-Tarraga A.-M."/>
            <person name="Temple L."/>
            <person name="James K.D."/>
            <person name="Harris B."/>
            <person name="Quail M.A."/>
            <person name="Achtman M."/>
            <person name="Atkin R."/>
            <person name="Baker S."/>
            <person name="Basham D."/>
            <person name="Bason N."/>
            <person name="Cherevach I."/>
            <person name="Chillingworth T."/>
            <person name="Collins M."/>
            <person name="Cronin A."/>
            <person name="Davis P."/>
            <person name="Doggett J."/>
            <person name="Feltwell T."/>
            <person name="Goble A."/>
            <person name="Hamlin N."/>
            <person name="Hauser H."/>
            <person name="Holroyd S."/>
            <person name="Jagels K."/>
            <person name="Leather S."/>
            <person name="Moule S."/>
            <person name="Norberczak H."/>
            <person name="O'Neil S."/>
            <person name="Ormond D."/>
            <person name="Price C."/>
            <person name="Rabbinowitsch E."/>
            <person name="Rutter S."/>
            <person name="Sanders M."/>
            <person name="Saunders D."/>
            <person name="Seeger K."/>
            <person name="Sharp S."/>
            <person name="Simmonds M."/>
            <person name="Skelton J."/>
            <person name="Squares R."/>
            <person name="Squares S."/>
            <person name="Stevens K."/>
            <person name="Unwin L."/>
            <person name="Whitehead S."/>
            <person name="Barrell B.G."/>
            <person name="Maskell D.J."/>
        </authorList>
    </citation>
    <scope>NUCLEOTIDE SEQUENCE [LARGE SCALE GENOMIC DNA]</scope>
    <source>
        <strain>Tohama I / ATCC BAA-589 / NCTC 13251</strain>
    </source>
</reference>
<proteinExistence type="inferred from homology"/>
<name>RL1_BORPE</name>
<protein>
    <recommendedName>
        <fullName evidence="1">Large ribosomal subunit protein uL1</fullName>
    </recommendedName>
    <alternativeName>
        <fullName evidence="2">50S ribosomal protein L1</fullName>
    </alternativeName>
</protein>
<organism>
    <name type="scientific">Bordetella pertussis (strain Tohama I / ATCC BAA-589 / NCTC 13251)</name>
    <dbReference type="NCBI Taxonomy" id="257313"/>
    <lineage>
        <taxon>Bacteria</taxon>
        <taxon>Pseudomonadati</taxon>
        <taxon>Pseudomonadota</taxon>
        <taxon>Betaproteobacteria</taxon>
        <taxon>Burkholderiales</taxon>
        <taxon>Alcaligenaceae</taxon>
        <taxon>Bordetella</taxon>
    </lineage>
</organism>
<accession>Q7W0S2</accession>
<keyword id="KW-1185">Reference proteome</keyword>
<keyword id="KW-0678">Repressor</keyword>
<keyword id="KW-0687">Ribonucleoprotein</keyword>
<keyword id="KW-0689">Ribosomal protein</keyword>
<keyword id="KW-0694">RNA-binding</keyword>
<keyword id="KW-0699">rRNA-binding</keyword>
<keyword id="KW-0810">Translation regulation</keyword>
<keyword id="KW-0820">tRNA-binding</keyword>
<sequence>MAKLSKRAAAIAQKIDRTKLYPVGEALNLVKETATAKFDESIDVAVQLGIDPKKSDQLVRGSVVLPAGTGKTVRVAVFAQGEKADAARAAGADIVGLDDLAEQIKAGQMDFDVVIASPDTMRVVGALGQVLGPRGLMPNPKVGTVTPDVATAVKNAKAGQIQYRTDKAGIIHATIGRASFGVEQLQNNLAALVDALQKARPAAAKGIYLRKLAVSSTMGGGARVEIASLSAN</sequence>
<comment type="function">
    <text evidence="1">Binds directly to 23S rRNA. The L1 stalk is quite mobile in the ribosome, and is involved in E site tRNA release.</text>
</comment>
<comment type="function">
    <text evidence="1">Protein L1 is also a translational repressor protein, it controls the translation of the L11 operon by binding to its mRNA.</text>
</comment>
<comment type="subunit">
    <text evidence="1">Part of the 50S ribosomal subunit.</text>
</comment>
<comment type="similarity">
    <text evidence="1">Belongs to the universal ribosomal protein uL1 family.</text>
</comment>
<feature type="chain" id="PRO_0000125626" description="Large ribosomal subunit protein uL1">
    <location>
        <begin position="1"/>
        <end position="232"/>
    </location>
</feature>
<evidence type="ECO:0000255" key="1">
    <source>
        <dbReference type="HAMAP-Rule" id="MF_01318"/>
    </source>
</evidence>
<evidence type="ECO:0000305" key="2"/>
<gene>
    <name evidence="1" type="primary">rplA</name>
    <name type="ordered locus">BP0011</name>
</gene>